<sequence length="416" mass="46529">MNFRLHGAFSNPSFVKIFFTKASPERRLTCFHVTKHGYSFQTDLHDYRKIMKFVISRNELGNLIKKVQNVVPQSTPIPVLTHVLIESCNDELVFTATDLTVSTRCVVKAKVYESGSVTIPSRRFFQLIRELTEANIEVAAHSGEMATITSGSSCFRLLSMGKEDFPMLPDMQNALRFTLDSERLKDMFQRTSFAVSREESRYVLTGVLLSIANGTMTVVGTDGKRLAKIDTEISLDPSFSGDYIIPIKAVEEIIRMSSEDVQSTIFLDQTKIAVECGNTLLVTKLLSGEFPDFSPVISTHSSVQLDLHREELISLLKQVALFTNESSHSVKFSFSPGELTLTANCTKVGEGKVSMAVNYTGETLEIAFNPFFFLDILKHSRDELVQLGISDSYNPGIITDSTRSLFVIMPMRLHDD</sequence>
<keyword id="KW-0963">Cytoplasm</keyword>
<keyword id="KW-0235">DNA replication</keyword>
<keyword id="KW-0238">DNA-binding</keyword>
<keyword id="KW-0239">DNA-directed DNA polymerase</keyword>
<keyword id="KW-0548">Nucleotidyltransferase</keyword>
<keyword id="KW-1185">Reference proteome</keyword>
<keyword id="KW-0808">Transferase</keyword>
<accession>O84078</accession>
<dbReference type="EMBL" id="AE001273">
    <property type="protein sequence ID" value="AAC67666.1"/>
    <property type="molecule type" value="Genomic_DNA"/>
</dbReference>
<dbReference type="PIR" id="E71559">
    <property type="entry name" value="E71559"/>
</dbReference>
<dbReference type="RefSeq" id="NP_219578.1">
    <property type="nucleotide sequence ID" value="NC_000117.1"/>
</dbReference>
<dbReference type="RefSeq" id="WP_010725022.1">
    <property type="nucleotide sequence ID" value="NC_000117.1"/>
</dbReference>
<dbReference type="SMR" id="O84078"/>
<dbReference type="FunCoup" id="O84078">
    <property type="interactions" value="215"/>
</dbReference>
<dbReference type="STRING" id="272561.CT_075"/>
<dbReference type="EnsemblBacteria" id="AAC67666">
    <property type="protein sequence ID" value="AAC67666"/>
    <property type="gene ID" value="CT_075"/>
</dbReference>
<dbReference type="GeneID" id="884117"/>
<dbReference type="KEGG" id="ctr:CT_075"/>
<dbReference type="PATRIC" id="fig|272561.5.peg.84"/>
<dbReference type="HOGENOM" id="CLU_038149_4_0_0"/>
<dbReference type="InParanoid" id="O84078"/>
<dbReference type="OrthoDB" id="8421503at2"/>
<dbReference type="Proteomes" id="UP000000431">
    <property type="component" value="Chromosome"/>
</dbReference>
<dbReference type="GO" id="GO:0005737">
    <property type="term" value="C:cytoplasm"/>
    <property type="evidence" value="ECO:0007669"/>
    <property type="project" value="UniProtKB-SubCell"/>
</dbReference>
<dbReference type="GO" id="GO:0009360">
    <property type="term" value="C:DNA polymerase III complex"/>
    <property type="evidence" value="ECO:0007669"/>
    <property type="project" value="InterPro"/>
</dbReference>
<dbReference type="GO" id="GO:0008408">
    <property type="term" value="F:3'-5' exonuclease activity"/>
    <property type="evidence" value="ECO:0007669"/>
    <property type="project" value="InterPro"/>
</dbReference>
<dbReference type="GO" id="GO:0003677">
    <property type="term" value="F:DNA binding"/>
    <property type="evidence" value="ECO:0007669"/>
    <property type="project" value="UniProtKB-KW"/>
</dbReference>
<dbReference type="GO" id="GO:0003887">
    <property type="term" value="F:DNA-directed DNA polymerase activity"/>
    <property type="evidence" value="ECO:0007669"/>
    <property type="project" value="UniProtKB-KW"/>
</dbReference>
<dbReference type="GO" id="GO:0006271">
    <property type="term" value="P:DNA strand elongation involved in DNA replication"/>
    <property type="evidence" value="ECO:0000318"/>
    <property type="project" value="GO_Central"/>
</dbReference>
<dbReference type="CDD" id="cd00140">
    <property type="entry name" value="beta_clamp"/>
    <property type="match status" value="1"/>
</dbReference>
<dbReference type="Gene3D" id="3.70.10.10">
    <property type="match status" value="1"/>
</dbReference>
<dbReference type="Gene3D" id="3.10.150.10">
    <property type="entry name" value="DNA Polymerase III, subunit A, domain 2"/>
    <property type="match status" value="1"/>
</dbReference>
<dbReference type="InterPro" id="IPR046938">
    <property type="entry name" value="DNA_clamp_sf"/>
</dbReference>
<dbReference type="InterPro" id="IPR001001">
    <property type="entry name" value="DNA_polIII_beta"/>
</dbReference>
<dbReference type="InterPro" id="IPR022635">
    <property type="entry name" value="DNA_polIII_beta_C"/>
</dbReference>
<dbReference type="InterPro" id="IPR022637">
    <property type="entry name" value="DNA_polIII_beta_cen"/>
</dbReference>
<dbReference type="InterPro" id="IPR022634">
    <property type="entry name" value="DNA_polIII_beta_N"/>
</dbReference>
<dbReference type="NCBIfam" id="TIGR00663">
    <property type="entry name" value="dnan"/>
    <property type="match status" value="1"/>
</dbReference>
<dbReference type="PANTHER" id="PTHR30478:SF0">
    <property type="entry name" value="BETA SLIDING CLAMP"/>
    <property type="match status" value="1"/>
</dbReference>
<dbReference type="PANTHER" id="PTHR30478">
    <property type="entry name" value="DNA POLYMERASE III SUBUNIT BETA"/>
    <property type="match status" value="1"/>
</dbReference>
<dbReference type="Pfam" id="PF00712">
    <property type="entry name" value="DNA_pol3_beta"/>
    <property type="match status" value="1"/>
</dbReference>
<dbReference type="Pfam" id="PF02767">
    <property type="entry name" value="DNA_pol3_beta_2"/>
    <property type="match status" value="1"/>
</dbReference>
<dbReference type="Pfam" id="PF02768">
    <property type="entry name" value="DNA_pol3_beta_3"/>
    <property type="match status" value="1"/>
</dbReference>
<dbReference type="PIRSF" id="PIRSF000804">
    <property type="entry name" value="DNA_pol_III_b"/>
    <property type="match status" value="1"/>
</dbReference>
<dbReference type="SMART" id="SM00480">
    <property type="entry name" value="POL3Bc"/>
    <property type="match status" value="1"/>
</dbReference>
<dbReference type="SUPFAM" id="SSF55979">
    <property type="entry name" value="DNA clamp"/>
    <property type="match status" value="3"/>
</dbReference>
<name>DPO3B_CHLTR</name>
<gene>
    <name type="primary">dnaN</name>
    <name type="ordered locus">CT_075</name>
</gene>
<comment type="function">
    <text evidence="1">Confers DNA tethering and processivity to DNA polymerases and other proteins. Acts as a clamp, forming a ring around DNA (a reaction catalyzed by the clamp-loading complex) which diffuses in an ATP-independent manner freely and bidirectionally along dsDNA. Initially characterized for its ability to contact the catalytic subunit of DNA polymerase III (Pol III), a complex, multichain enzyme responsible for most of the replicative synthesis in bacteria; Pol III exhibits 3'-5' exonuclease proofreading activity. The beta chain is required for initiation of replication as well as for processivity of DNA replication.</text>
</comment>
<comment type="subunit">
    <text evidence="1">Forms a ring-shaped head-to-tail homodimer around DNA which binds and tethers DNA polymerases and other proteins to the DNA. The DNA replisome complex has a single clamp-loading complex (3 tau and 1 each of delta, delta', psi and chi subunits) which binds 3 Pol III cores (1 core on the leading strand and 2 on the lagging strand) each with a beta sliding clamp dimer. Additional proteins in the replisome are other copies of gamma, psi and chi, Ssb, DNA helicase and RNA primase.</text>
</comment>
<comment type="subcellular location">
    <subcellularLocation>
        <location evidence="1">Cytoplasm</location>
    </subcellularLocation>
</comment>
<comment type="similarity">
    <text evidence="2">Belongs to the beta sliding clamp family.</text>
</comment>
<feature type="chain" id="PRO_0000105433" description="Beta sliding clamp">
    <location>
        <begin position="1"/>
        <end position="416"/>
    </location>
</feature>
<evidence type="ECO:0000250" key="1">
    <source>
        <dbReference type="UniProtKB" id="P0A988"/>
    </source>
</evidence>
<evidence type="ECO:0000305" key="2"/>
<proteinExistence type="inferred from homology"/>
<reference key="1">
    <citation type="journal article" date="1998" name="Science">
        <title>Genome sequence of an obligate intracellular pathogen of humans: Chlamydia trachomatis.</title>
        <authorList>
            <person name="Stephens R.S."/>
            <person name="Kalman S."/>
            <person name="Lammel C.J."/>
            <person name="Fan J."/>
            <person name="Marathe R."/>
            <person name="Aravind L."/>
            <person name="Mitchell W.P."/>
            <person name="Olinger L."/>
            <person name="Tatusov R.L."/>
            <person name="Zhao Q."/>
            <person name="Koonin E.V."/>
            <person name="Davis R.W."/>
        </authorList>
    </citation>
    <scope>NUCLEOTIDE SEQUENCE [LARGE SCALE GENOMIC DNA]</scope>
    <source>
        <strain>ATCC VR-885 / DSM 19411 / UW-3/Cx</strain>
    </source>
</reference>
<organism>
    <name type="scientific">Chlamydia trachomatis serovar D (strain ATCC VR-885 / DSM 19411 / UW-3/Cx)</name>
    <dbReference type="NCBI Taxonomy" id="272561"/>
    <lineage>
        <taxon>Bacteria</taxon>
        <taxon>Pseudomonadati</taxon>
        <taxon>Chlamydiota</taxon>
        <taxon>Chlamydiia</taxon>
        <taxon>Chlamydiales</taxon>
        <taxon>Chlamydiaceae</taxon>
        <taxon>Chlamydia/Chlamydophila group</taxon>
        <taxon>Chlamydia</taxon>
    </lineage>
</organism>
<protein>
    <recommendedName>
        <fullName>Beta sliding clamp</fullName>
        <shortName>Beta clamp</shortName>
        <shortName>Sliding clamp</shortName>
    </recommendedName>
    <alternativeName>
        <fullName>Beta-clamp processivity factor</fullName>
    </alternativeName>
    <alternativeName>
        <fullName>DNA polymerase III beta sliding clamp subunit</fullName>
    </alternativeName>
    <alternativeName>
        <fullName>DNA polymerase III subunit beta</fullName>
    </alternativeName>
</protein>